<comment type="function">
    <text evidence="1">Specifically dimethylates two adjacent adenosines (A1518 and A1519) in the loop of a conserved hairpin near the 3'-end of 16S rRNA in the 30S particle. May play a critical role in biogenesis of 30S subunits.</text>
</comment>
<comment type="catalytic activity">
    <reaction evidence="1">
        <text>adenosine(1518)/adenosine(1519) in 16S rRNA + 4 S-adenosyl-L-methionine = N(6)-dimethyladenosine(1518)/N(6)-dimethyladenosine(1519) in 16S rRNA + 4 S-adenosyl-L-homocysteine + 4 H(+)</text>
        <dbReference type="Rhea" id="RHEA:19609"/>
        <dbReference type="Rhea" id="RHEA-COMP:10232"/>
        <dbReference type="Rhea" id="RHEA-COMP:10233"/>
        <dbReference type="ChEBI" id="CHEBI:15378"/>
        <dbReference type="ChEBI" id="CHEBI:57856"/>
        <dbReference type="ChEBI" id="CHEBI:59789"/>
        <dbReference type="ChEBI" id="CHEBI:74411"/>
        <dbReference type="ChEBI" id="CHEBI:74493"/>
        <dbReference type="EC" id="2.1.1.182"/>
    </reaction>
</comment>
<comment type="subcellular location">
    <subcellularLocation>
        <location evidence="1">Cytoplasm</location>
    </subcellularLocation>
</comment>
<comment type="similarity">
    <text evidence="1">Belongs to the class I-like SAM-binding methyltransferase superfamily. rRNA adenine N(6)-methyltransferase family. RsmA subfamily.</text>
</comment>
<sequence>MNNRVHQGHLARKRFGQNFLNDQFVIDSIVSAINPQKGQAMVEIGPGLAALTEPVGERLDQLTVIELDRDLAARLQTHPFLGPKLTIYQQDAMTFNFGELAEKMGQPLRVFGNLPYNISTPLMFHLFSYTDAIADMHFMLQKEVVNRLVAGPNSKAYGRLSVMAQYYCNVIPVLEVPPSAFTPPPKVDSAVVRLVPHATMPHPVKDVRVLSRITTEAFNQRRKTIRNSLGNLFSVEVLTGMGIDPAMRAENISVAQYCQMANYLAENAPLQES</sequence>
<name>RSMA_SHIF8</name>
<reference key="1">
    <citation type="journal article" date="2006" name="BMC Genomics">
        <title>Complete genome sequence of Shigella flexneri 5b and comparison with Shigella flexneri 2a.</title>
        <authorList>
            <person name="Nie H."/>
            <person name="Yang F."/>
            <person name="Zhang X."/>
            <person name="Yang J."/>
            <person name="Chen L."/>
            <person name="Wang J."/>
            <person name="Xiong Z."/>
            <person name="Peng J."/>
            <person name="Sun L."/>
            <person name="Dong J."/>
            <person name="Xue Y."/>
            <person name="Xu X."/>
            <person name="Chen S."/>
            <person name="Yao Z."/>
            <person name="Shen Y."/>
            <person name="Jin Q."/>
        </authorList>
    </citation>
    <scope>NUCLEOTIDE SEQUENCE [LARGE SCALE GENOMIC DNA]</scope>
    <source>
        <strain>8401</strain>
    </source>
</reference>
<dbReference type="EC" id="2.1.1.182" evidence="1"/>
<dbReference type="EMBL" id="CP000266">
    <property type="protein sequence ID" value="ABF02332.1"/>
    <property type="molecule type" value="Genomic_DNA"/>
</dbReference>
<dbReference type="RefSeq" id="WP_001065381.1">
    <property type="nucleotide sequence ID" value="NC_008258.1"/>
</dbReference>
<dbReference type="SMR" id="Q0T8E4"/>
<dbReference type="GeneID" id="93777384"/>
<dbReference type="KEGG" id="sfv:SFV_0045"/>
<dbReference type="HOGENOM" id="CLU_041220_0_1_6"/>
<dbReference type="Proteomes" id="UP000000659">
    <property type="component" value="Chromosome"/>
</dbReference>
<dbReference type="GO" id="GO:0005829">
    <property type="term" value="C:cytosol"/>
    <property type="evidence" value="ECO:0007669"/>
    <property type="project" value="TreeGrafter"/>
</dbReference>
<dbReference type="GO" id="GO:0052908">
    <property type="term" value="F:16S rRNA (adenine(1518)-N(6)/adenine(1519)-N(6))-dimethyltransferase activity"/>
    <property type="evidence" value="ECO:0007669"/>
    <property type="project" value="UniProtKB-EC"/>
</dbReference>
<dbReference type="GO" id="GO:0003723">
    <property type="term" value="F:RNA binding"/>
    <property type="evidence" value="ECO:0007669"/>
    <property type="project" value="UniProtKB-KW"/>
</dbReference>
<dbReference type="FunFam" id="1.10.8.100:FF:000001">
    <property type="entry name" value="Ribosomal RNA small subunit methyltransferase A"/>
    <property type="match status" value="1"/>
</dbReference>
<dbReference type="FunFam" id="3.40.50.150:FF:000006">
    <property type="entry name" value="Ribosomal RNA small subunit methyltransferase A"/>
    <property type="match status" value="1"/>
</dbReference>
<dbReference type="Gene3D" id="1.10.8.100">
    <property type="entry name" value="Ribosomal RNA adenine dimethylase-like, domain 2"/>
    <property type="match status" value="1"/>
</dbReference>
<dbReference type="Gene3D" id="3.40.50.150">
    <property type="entry name" value="Vaccinia Virus protein VP39"/>
    <property type="match status" value="1"/>
</dbReference>
<dbReference type="HAMAP" id="MF_00607">
    <property type="entry name" value="16SrRNA_methyltr_A"/>
    <property type="match status" value="1"/>
</dbReference>
<dbReference type="InterPro" id="IPR001737">
    <property type="entry name" value="KsgA/Erm"/>
</dbReference>
<dbReference type="InterPro" id="IPR023165">
    <property type="entry name" value="rRNA_Ade_diMease-like_C"/>
</dbReference>
<dbReference type="InterPro" id="IPR020596">
    <property type="entry name" value="rRNA_Ade_Mease_Trfase_CS"/>
</dbReference>
<dbReference type="InterPro" id="IPR020598">
    <property type="entry name" value="rRNA_Ade_methylase_Trfase_N"/>
</dbReference>
<dbReference type="InterPro" id="IPR011530">
    <property type="entry name" value="rRNA_adenine_dimethylase"/>
</dbReference>
<dbReference type="InterPro" id="IPR029063">
    <property type="entry name" value="SAM-dependent_MTases_sf"/>
</dbReference>
<dbReference type="NCBIfam" id="TIGR00755">
    <property type="entry name" value="ksgA"/>
    <property type="match status" value="1"/>
</dbReference>
<dbReference type="PANTHER" id="PTHR11727">
    <property type="entry name" value="DIMETHYLADENOSINE TRANSFERASE"/>
    <property type="match status" value="1"/>
</dbReference>
<dbReference type="PANTHER" id="PTHR11727:SF7">
    <property type="entry name" value="DIMETHYLADENOSINE TRANSFERASE-RELATED"/>
    <property type="match status" value="1"/>
</dbReference>
<dbReference type="Pfam" id="PF00398">
    <property type="entry name" value="RrnaAD"/>
    <property type="match status" value="1"/>
</dbReference>
<dbReference type="SMART" id="SM00650">
    <property type="entry name" value="rADc"/>
    <property type="match status" value="1"/>
</dbReference>
<dbReference type="SUPFAM" id="SSF53335">
    <property type="entry name" value="S-adenosyl-L-methionine-dependent methyltransferases"/>
    <property type="match status" value="1"/>
</dbReference>
<dbReference type="PROSITE" id="PS01131">
    <property type="entry name" value="RRNA_A_DIMETH"/>
    <property type="match status" value="1"/>
</dbReference>
<dbReference type="PROSITE" id="PS51689">
    <property type="entry name" value="SAM_RNA_A_N6_MT"/>
    <property type="match status" value="1"/>
</dbReference>
<organism>
    <name type="scientific">Shigella flexneri serotype 5b (strain 8401)</name>
    <dbReference type="NCBI Taxonomy" id="373384"/>
    <lineage>
        <taxon>Bacteria</taxon>
        <taxon>Pseudomonadati</taxon>
        <taxon>Pseudomonadota</taxon>
        <taxon>Gammaproteobacteria</taxon>
        <taxon>Enterobacterales</taxon>
        <taxon>Enterobacteriaceae</taxon>
        <taxon>Shigella</taxon>
    </lineage>
</organism>
<feature type="chain" id="PRO_1000056676" description="Ribosomal RNA small subunit methyltransferase A">
    <location>
        <begin position="1"/>
        <end position="273"/>
    </location>
</feature>
<feature type="binding site" evidence="1">
    <location>
        <position position="18"/>
    </location>
    <ligand>
        <name>S-adenosyl-L-methionine</name>
        <dbReference type="ChEBI" id="CHEBI:59789"/>
    </ligand>
</feature>
<feature type="binding site" evidence="1">
    <location>
        <position position="20"/>
    </location>
    <ligand>
        <name>S-adenosyl-L-methionine</name>
        <dbReference type="ChEBI" id="CHEBI:59789"/>
    </ligand>
</feature>
<feature type="binding site" evidence="1">
    <location>
        <position position="45"/>
    </location>
    <ligand>
        <name>S-adenosyl-L-methionine</name>
        <dbReference type="ChEBI" id="CHEBI:59789"/>
    </ligand>
</feature>
<feature type="binding site" evidence="1">
    <location>
        <position position="66"/>
    </location>
    <ligand>
        <name>S-adenosyl-L-methionine</name>
        <dbReference type="ChEBI" id="CHEBI:59789"/>
    </ligand>
</feature>
<feature type="binding site" evidence="1">
    <location>
        <position position="91"/>
    </location>
    <ligand>
        <name>S-adenosyl-L-methionine</name>
        <dbReference type="ChEBI" id="CHEBI:59789"/>
    </ligand>
</feature>
<feature type="binding site" evidence="1">
    <location>
        <position position="113"/>
    </location>
    <ligand>
        <name>S-adenosyl-L-methionine</name>
        <dbReference type="ChEBI" id="CHEBI:59789"/>
    </ligand>
</feature>
<accession>Q0T8E4</accession>
<gene>
    <name evidence="1" type="primary">rsmA</name>
    <name evidence="1" type="synonym">ksgA</name>
    <name type="ordered locus">SFV_0045</name>
</gene>
<keyword id="KW-0963">Cytoplasm</keyword>
<keyword id="KW-0489">Methyltransferase</keyword>
<keyword id="KW-0694">RNA-binding</keyword>
<keyword id="KW-0698">rRNA processing</keyword>
<keyword id="KW-0949">S-adenosyl-L-methionine</keyword>
<keyword id="KW-0808">Transferase</keyword>
<protein>
    <recommendedName>
        <fullName evidence="1">Ribosomal RNA small subunit methyltransferase A</fullName>
        <ecNumber evidence="1">2.1.1.182</ecNumber>
    </recommendedName>
    <alternativeName>
        <fullName evidence="1">16S rRNA (adenine(1518)-N(6)/adenine(1519)-N(6))-dimethyltransferase</fullName>
    </alternativeName>
    <alternativeName>
        <fullName evidence="1">16S rRNA dimethyladenosine transferase</fullName>
    </alternativeName>
    <alternativeName>
        <fullName evidence="1">16S rRNA dimethylase</fullName>
    </alternativeName>
    <alternativeName>
        <fullName evidence="1">S-adenosylmethionine-6-N', N'-adenosyl(rRNA) dimethyltransferase</fullName>
    </alternativeName>
</protein>
<proteinExistence type="inferred from homology"/>
<evidence type="ECO:0000255" key="1">
    <source>
        <dbReference type="HAMAP-Rule" id="MF_00607"/>
    </source>
</evidence>